<name>PYRC_LEIXX</name>
<proteinExistence type="inferred from homology"/>
<feature type="chain" id="PRO_0000147238" description="Dihydroorotase">
    <location>
        <begin position="1"/>
        <end position="438"/>
    </location>
</feature>
<feature type="active site" evidence="1">
    <location>
        <position position="305"/>
    </location>
</feature>
<feature type="binding site" evidence="1">
    <location>
        <position position="58"/>
    </location>
    <ligand>
        <name>Zn(2+)</name>
        <dbReference type="ChEBI" id="CHEBI:29105"/>
        <label>1</label>
    </ligand>
</feature>
<feature type="binding site" evidence="1">
    <location>
        <begin position="60"/>
        <end position="62"/>
    </location>
    <ligand>
        <name>substrate</name>
    </ligand>
</feature>
<feature type="binding site" evidence="1">
    <location>
        <position position="60"/>
    </location>
    <ligand>
        <name>Zn(2+)</name>
        <dbReference type="ChEBI" id="CHEBI:29105"/>
        <label>1</label>
    </ligand>
</feature>
<feature type="binding site" evidence="1">
    <location>
        <position position="92"/>
    </location>
    <ligand>
        <name>substrate</name>
    </ligand>
</feature>
<feature type="binding site" evidence="1">
    <location>
        <position position="152"/>
    </location>
    <ligand>
        <name>Zn(2+)</name>
        <dbReference type="ChEBI" id="CHEBI:29105"/>
        <label>1</label>
    </ligand>
</feature>
<feature type="binding site" evidence="1">
    <location>
        <position position="152"/>
    </location>
    <ligand>
        <name>Zn(2+)</name>
        <dbReference type="ChEBI" id="CHEBI:29105"/>
        <label>2</label>
    </ligand>
</feature>
<feature type="binding site" evidence="1">
    <location>
        <position position="179"/>
    </location>
    <ligand>
        <name>Zn(2+)</name>
        <dbReference type="ChEBI" id="CHEBI:29105"/>
        <label>2</label>
    </ligand>
</feature>
<feature type="binding site" evidence="1">
    <location>
        <position position="232"/>
    </location>
    <ligand>
        <name>Zn(2+)</name>
        <dbReference type="ChEBI" id="CHEBI:29105"/>
        <label>2</label>
    </ligand>
</feature>
<feature type="binding site" evidence="1">
    <location>
        <position position="278"/>
    </location>
    <ligand>
        <name>substrate</name>
    </ligand>
</feature>
<feature type="binding site" evidence="1">
    <location>
        <position position="305"/>
    </location>
    <ligand>
        <name>Zn(2+)</name>
        <dbReference type="ChEBI" id="CHEBI:29105"/>
        <label>1</label>
    </ligand>
</feature>
<feature type="binding site" evidence="1">
    <location>
        <position position="309"/>
    </location>
    <ligand>
        <name>substrate</name>
    </ligand>
</feature>
<feature type="binding site" evidence="1">
    <location>
        <begin position="323"/>
        <end position="324"/>
    </location>
    <ligand>
        <name>substrate</name>
    </ligand>
</feature>
<protein>
    <recommendedName>
        <fullName evidence="1">Dihydroorotase</fullName>
        <shortName evidence="1">DHOase</shortName>
        <ecNumber evidence="1">3.5.2.3</ecNumber>
    </recommendedName>
</protein>
<gene>
    <name evidence="1" type="primary">pyrC</name>
    <name type="ordered locus">Lxx11070</name>
</gene>
<comment type="function">
    <text evidence="1">Catalyzes the reversible cyclization of carbamoyl aspartate to dihydroorotate.</text>
</comment>
<comment type="catalytic activity">
    <reaction evidence="1">
        <text>(S)-dihydroorotate + H2O = N-carbamoyl-L-aspartate + H(+)</text>
        <dbReference type="Rhea" id="RHEA:24296"/>
        <dbReference type="ChEBI" id="CHEBI:15377"/>
        <dbReference type="ChEBI" id="CHEBI:15378"/>
        <dbReference type="ChEBI" id="CHEBI:30864"/>
        <dbReference type="ChEBI" id="CHEBI:32814"/>
        <dbReference type="EC" id="3.5.2.3"/>
    </reaction>
</comment>
<comment type="cofactor">
    <cofactor evidence="1">
        <name>Zn(2+)</name>
        <dbReference type="ChEBI" id="CHEBI:29105"/>
    </cofactor>
    <text evidence="1">Binds 2 Zn(2+) ions per subunit.</text>
</comment>
<comment type="pathway">
    <text evidence="1">Pyrimidine metabolism; UMP biosynthesis via de novo pathway; (S)-dihydroorotate from bicarbonate: step 3/3.</text>
</comment>
<comment type="similarity">
    <text evidence="1">Belongs to the metallo-dependent hydrolases superfamily. DHOase family. Class I DHOase subfamily.</text>
</comment>
<dbReference type="EC" id="3.5.2.3" evidence="1"/>
<dbReference type="EMBL" id="AE016822">
    <property type="protein sequence ID" value="AAT88958.1"/>
    <property type="molecule type" value="Genomic_DNA"/>
</dbReference>
<dbReference type="RefSeq" id="WP_011185954.1">
    <property type="nucleotide sequence ID" value="NC_006087.1"/>
</dbReference>
<dbReference type="SMR" id="Q6AF87"/>
<dbReference type="STRING" id="281090.Lxx11070"/>
<dbReference type="KEGG" id="lxx:Lxx11070"/>
<dbReference type="eggNOG" id="COG0044">
    <property type="taxonomic scope" value="Bacteria"/>
</dbReference>
<dbReference type="HOGENOM" id="CLU_015572_1_0_11"/>
<dbReference type="UniPathway" id="UPA00070">
    <property type="reaction ID" value="UER00117"/>
</dbReference>
<dbReference type="Proteomes" id="UP000001306">
    <property type="component" value="Chromosome"/>
</dbReference>
<dbReference type="GO" id="GO:0005737">
    <property type="term" value="C:cytoplasm"/>
    <property type="evidence" value="ECO:0007669"/>
    <property type="project" value="TreeGrafter"/>
</dbReference>
<dbReference type="GO" id="GO:0004038">
    <property type="term" value="F:allantoinase activity"/>
    <property type="evidence" value="ECO:0007669"/>
    <property type="project" value="TreeGrafter"/>
</dbReference>
<dbReference type="GO" id="GO:0004151">
    <property type="term" value="F:dihydroorotase activity"/>
    <property type="evidence" value="ECO:0007669"/>
    <property type="project" value="UniProtKB-UniRule"/>
</dbReference>
<dbReference type="GO" id="GO:0008270">
    <property type="term" value="F:zinc ion binding"/>
    <property type="evidence" value="ECO:0007669"/>
    <property type="project" value="UniProtKB-UniRule"/>
</dbReference>
<dbReference type="GO" id="GO:0044205">
    <property type="term" value="P:'de novo' UMP biosynthetic process"/>
    <property type="evidence" value="ECO:0007669"/>
    <property type="project" value="UniProtKB-UniRule"/>
</dbReference>
<dbReference type="GO" id="GO:0006145">
    <property type="term" value="P:purine nucleobase catabolic process"/>
    <property type="evidence" value="ECO:0007669"/>
    <property type="project" value="TreeGrafter"/>
</dbReference>
<dbReference type="CDD" id="cd01317">
    <property type="entry name" value="DHOase_IIa"/>
    <property type="match status" value="1"/>
</dbReference>
<dbReference type="Gene3D" id="3.20.20.140">
    <property type="entry name" value="Metal-dependent hydrolases"/>
    <property type="match status" value="1"/>
</dbReference>
<dbReference type="Gene3D" id="2.30.40.10">
    <property type="entry name" value="Urease, subunit C, domain 1"/>
    <property type="match status" value="1"/>
</dbReference>
<dbReference type="HAMAP" id="MF_00220_B">
    <property type="entry name" value="PyrC_classI_B"/>
    <property type="match status" value="1"/>
</dbReference>
<dbReference type="InterPro" id="IPR006680">
    <property type="entry name" value="Amidohydro-rel"/>
</dbReference>
<dbReference type="InterPro" id="IPR004722">
    <property type="entry name" value="DHOase"/>
</dbReference>
<dbReference type="InterPro" id="IPR050138">
    <property type="entry name" value="DHOase/Allantoinase_Hydrolase"/>
</dbReference>
<dbReference type="InterPro" id="IPR002195">
    <property type="entry name" value="Dihydroorotase_CS"/>
</dbReference>
<dbReference type="InterPro" id="IPR011059">
    <property type="entry name" value="Metal-dep_hydrolase_composite"/>
</dbReference>
<dbReference type="InterPro" id="IPR032466">
    <property type="entry name" value="Metal_Hydrolase"/>
</dbReference>
<dbReference type="NCBIfam" id="NF006836">
    <property type="entry name" value="PRK09357.1-1"/>
    <property type="match status" value="1"/>
</dbReference>
<dbReference type="NCBIfam" id="TIGR00857">
    <property type="entry name" value="pyrC_multi"/>
    <property type="match status" value="1"/>
</dbReference>
<dbReference type="PANTHER" id="PTHR43668">
    <property type="entry name" value="ALLANTOINASE"/>
    <property type="match status" value="1"/>
</dbReference>
<dbReference type="PANTHER" id="PTHR43668:SF2">
    <property type="entry name" value="ALLANTOINASE"/>
    <property type="match status" value="1"/>
</dbReference>
<dbReference type="Pfam" id="PF01979">
    <property type="entry name" value="Amidohydro_1"/>
    <property type="match status" value="1"/>
</dbReference>
<dbReference type="SUPFAM" id="SSF51338">
    <property type="entry name" value="Composite domain of metallo-dependent hydrolases"/>
    <property type="match status" value="1"/>
</dbReference>
<dbReference type="SUPFAM" id="SSF51556">
    <property type="entry name" value="Metallo-dependent hydrolases"/>
    <property type="match status" value="1"/>
</dbReference>
<dbReference type="PROSITE" id="PS00483">
    <property type="entry name" value="DIHYDROOROTASE_2"/>
    <property type="match status" value="1"/>
</dbReference>
<reference key="1">
    <citation type="journal article" date="2004" name="Mol. Plant Microbe Interact.">
        <title>The genome sequence of the Gram-positive sugarcane pathogen Leifsonia xyli subsp. xyli.</title>
        <authorList>
            <person name="Monteiro-Vitorello C.B."/>
            <person name="Camargo L.E.A."/>
            <person name="Van Sluys M.A."/>
            <person name="Kitajima J.P."/>
            <person name="Truffi D."/>
            <person name="do Amaral A.M."/>
            <person name="Harakava R."/>
            <person name="de Oliveira J.C.F."/>
            <person name="Wood D."/>
            <person name="de Oliveira M.C."/>
            <person name="Miyaki C.Y."/>
            <person name="Takita M.A."/>
            <person name="da Silva A.C.R."/>
            <person name="Furlan L.R."/>
            <person name="Carraro D.M."/>
            <person name="Camarotte G."/>
            <person name="Almeida N.F. Jr."/>
            <person name="Carrer H."/>
            <person name="Coutinho L.L."/>
            <person name="El-Dorry H.A."/>
            <person name="Ferro M.I.T."/>
            <person name="Gagliardi P.R."/>
            <person name="Giglioti E."/>
            <person name="Goldman M.H.S."/>
            <person name="Goldman G.H."/>
            <person name="Kimura E.T."/>
            <person name="Ferro E.S."/>
            <person name="Kuramae E.E."/>
            <person name="Lemos E.G.M."/>
            <person name="Lemos M.V.F."/>
            <person name="Mauro S.M.Z."/>
            <person name="Machado M.A."/>
            <person name="Marino C.L."/>
            <person name="Menck C.F."/>
            <person name="Nunes L.R."/>
            <person name="Oliveira R.C."/>
            <person name="Pereira G.G."/>
            <person name="Siqueira W."/>
            <person name="de Souza A.A."/>
            <person name="Tsai S.M."/>
            <person name="Zanca A.S."/>
            <person name="Simpson A.J.G."/>
            <person name="Brumbley S.M."/>
            <person name="Setubal J.C."/>
        </authorList>
    </citation>
    <scope>NUCLEOTIDE SEQUENCE [LARGE SCALE GENOMIC DNA]</scope>
    <source>
        <strain>CTCB07</strain>
    </source>
</reference>
<keyword id="KW-0378">Hydrolase</keyword>
<keyword id="KW-0479">Metal-binding</keyword>
<keyword id="KW-0665">Pyrimidine biosynthesis</keyword>
<keyword id="KW-1185">Reference proteome</keyword>
<keyword id="KW-0862">Zinc</keyword>
<accession>Q6AF87</accession>
<organism>
    <name type="scientific">Leifsonia xyli subsp. xyli (strain CTCB07)</name>
    <dbReference type="NCBI Taxonomy" id="281090"/>
    <lineage>
        <taxon>Bacteria</taxon>
        <taxon>Bacillati</taxon>
        <taxon>Actinomycetota</taxon>
        <taxon>Actinomycetes</taxon>
        <taxon>Micrococcales</taxon>
        <taxon>Microbacteriaceae</taxon>
        <taxon>Leifsonia</taxon>
    </lineage>
</organism>
<evidence type="ECO:0000255" key="1">
    <source>
        <dbReference type="HAMAP-Rule" id="MF_00220"/>
    </source>
</evidence>
<sequence>MSDETFVITGAMLADGSRTDLLLAGGRIQETGVRLSAAGATVVDADGLLALPGLVDLHTHLREPGYEQSETVLTGTRAAAAGGFTEVFAMANTSPVADTAGVVEQVLSLGEAAGYATVRPIGAVTVGLEGERLAELGAMADSRARVRVFSDDGKCVSDPLLMRRALEYVKAFDGVIAQHAQEPRITAGAQMNEGALSGELGLAGWPAVAEESIIARDVLLAEHVGSRLHVCHVSTAGSVDVIRWAKARGIDVTAEVTPHHLLLTEELVSGYDARYKVNPPLRRSEDVEALRAGLADGTIDIVATDHAPHPVEAKDCEWDAAAFGMVGLESALSVVQSSVVDTGMLGWADIARVLSATPARIGRLAGHGTPVEAGAPAELFLYDPAAAREFSTGELAGKGVNSPYLSMTLSGRVVATFHRGYATVLDGAVLESVGGARG</sequence>